<evidence type="ECO:0000255" key="1">
    <source>
        <dbReference type="HAMAP-Rule" id="MF_00518"/>
    </source>
</evidence>
<protein>
    <recommendedName>
        <fullName evidence="1">D-aminoacyl-tRNA deacylase</fullName>
        <shortName evidence="1">DTD</shortName>
        <ecNumber evidence="1">3.1.1.96</ecNumber>
    </recommendedName>
    <alternativeName>
        <fullName evidence="1">Gly-tRNA(Ala) deacylase</fullName>
    </alternativeName>
</protein>
<gene>
    <name evidence="1" type="primary">dtd</name>
    <name type="ordered locus">Sbal_0318</name>
</gene>
<keyword id="KW-0963">Cytoplasm</keyword>
<keyword id="KW-0378">Hydrolase</keyword>
<keyword id="KW-1185">Reference proteome</keyword>
<keyword id="KW-0694">RNA-binding</keyword>
<keyword id="KW-0820">tRNA-binding</keyword>
<sequence>MIALIQRVSRASVVVDNQTIGAIDKGLLVLLGVEQEDTREKMEKLATKVMSYRMFSDENGKMNLNLEQVGGSLLVVSQFTLAADTGRGLRPSFSGAGTPDQALALYEEFVAFCRAKGVTTETGQFGADMQVSLVNDGPVTFNLQV</sequence>
<proteinExistence type="inferred from homology"/>
<name>DTD_SHEB5</name>
<reference key="1">
    <citation type="submission" date="2007-02" db="EMBL/GenBank/DDBJ databases">
        <title>Complete sequence of chromosome of Shewanella baltica OS155.</title>
        <authorList>
            <consortium name="US DOE Joint Genome Institute"/>
            <person name="Copeland A."/>
            <person name="Lucas S."/>
            <person name="Lapidus A."/>
            <person name="Barry K."/>
            <person name="Detter J.C."/>
            <person name="Glavina del Rio T."/>
            <person name="Hammon N."/>
            <person name="Israni S."/>
            <person name="Dalin E."/>
            <person name="Tice H."/>
            <person name="Pitluck S."/>
            <person name="Sims D.R."/>
            <person name="Brettin T."/>
            <person name="Bruce D."/>
            <person name="Han C."/>
            <person name="Tapia R."/>
            <person name="Brainard J."/>
            <person name="Schmutz J."/>
            <person name="Larimer F."/>
            <person name="Land M."/>
            <person name="Hauser L."/>
            <person name="Kyrpides N."/>
            <person name="Mikhailova N."/>
            <person name="Brettar I."/>
            <person name="Klappenbach J."/>
            <person name="Konstantinidis K."/>
            <person name="Rodrigues J."/>
            <person name="Tiedje J."/>
            <person name="Richardson P."/>
        </authorList>
    </citation>
    <scope>NUCLEOTIDE SEQUENCE [LARGE SCALE GENOMIC DNA]</scope>
    <source>
        <strain>OS155 / ATCC BAA-1091</strain>
    </source>
</reference>
<feature type="chain" id="PRO_1000050880" description="D-aminoacyl-tRNA deacylase">
    <location>
        <begin position="1"/>
        <end position="145"/>
    </location>
</feature>
<feature type="short sequence motif" description="Gly-cisPro motif, important for rejection of L-amino acids" evidence="1">
    <location>
        <begin position="137"/>
        <end position="138"/>
    </location>
</feature>
<accession>A3CZD8</accession>
<organism>
    <name type="scientific">Shewanella baltica (strain OS155 / ATCC BAA-1091)</name>
    <dbReference type="NCBI Taxonomy" id="325240"/>
    <lineage>
        <taxon>Bacteria</taxon>
        <taxon>Pseudomonadati</taxon>
        <taxon>Pseudomonadota</taxon>
        <taxon>Gammaproteobacteria</taxon>
        <taxon>Alteromonadales</taxon>
        <taxon>Shewanellaceae</taxon>
        <taxon>Shewanella</taxon>
    </lineage>
</organism>
<dbReference type="EC" id="3.1.1.96" evidence="1"/>
<dbReference type="EMBL" id="CP000563">
    <property type="protein sequence ID" value="ABN59851.1"/>
    <property type="molecule type" value="Genomic_DNA"/>
</dbReference>
<dbReference type="RefSeq" id="WP_011845560.1">
    <property type="nucleotide sequence ID" value="NC_009052.1"/>
</dbReference>
<dbReference type="SMR" id="A3CZD8"/>
<dbReference type="STRING" id="325240.Sbal_0318"/>
<dbReference type="KEGG" id="sbl:Sbal_0318"/>
<dbReference type="HOGENOM" id="CLU_076901_1_0_6"/>
<dbReference type="OrthoDB" id="9801395at2"/>
<dbReference type="Proteomes" id="UP000001557">
    <property type="component" value="Chromosome"/>
</dbReference>
<dbReference type="GO" id="GO:0005737">
    <property type="term" value="C:cytoplasm"/>
    <property type="evidence" value="ECO:0007669"/>
    <property type="project" value="UniProtKB-SubCell"/>
</dbReference>
<dbReference type="GO" id="GO:0051500">
    <property type="term" value="F:D-tyrosyl-tRNA(Tyr) deacylase activity"/>
    <property type="evidence" value="ECO:0007669"/>
    <property type="project" value="TreeGrafter"/>
</dbReference>
<dbReference type="GO" id="GO:0106026">
    <property type="term" value="F:Gly-tRNA(Ala) deacylase activity"/>
    <property type="evidence" value="ECO:0007669"/>
    <property type="project" value="UniProtKB-UniRule"/>
</dbReference>
<dbReference type="GO" id="GO:0043908">
    <property type="term" value="F:Ser(Gly)-tRNA(Ala) hydrolase activity"/>
    <property type="evidence" value="ECO:0007669"/>
    <property type="project" value="UniProtKB-UniRule"/>
</dbReference>
<dbReference type="GO" id="GO:0000049">
    <property type="term" value="F:tRNA binding"/>
    <property type="evidence" value="ECO:0007669"/>
    <property type="project" value="UniProtKB-UniRule"/>
</dbReference>
<dbReference type="GO" id="GO:0019478">
    <property type="term" value="P:D-amino acid catabolic process"/>
    <property type="evidence" value="ECO:0007669"/>
    <property type="project" value="UniProtKB-UniRule"/>
</dbReference>
<dbReference type="CDD" id="cd00563">
    <property type="entry name" value="Dtyr_deacylase"/>
    <property type="match status" value="1"/>
</dbReference>
<dbReference type="FunFam" id="3.50.80.10:FF:000001">
    <property type="entry name" value="D-aminoacyl-tRNA deacylase"/>
    <property type="match status" value="1"/>
</dbReference>
<dbReference type="Gene3D" id="3.50.80.10">
    <property type="entry name" value="D-tyrosyl-tRNA(Tyr) deacylase"/>
    <property type="match status" value="1"/>
</dbReference>
<dbReference type="HAMAP" id="MF_00518">
    <property type="entry name" value="Deacylase_Dtd"/>
    <property type="match status" value="1"/>
</dbReference>
<dbReference type="InterPro" id="IPR003732">
    <property type="entry name" value="Daa-tRNA_deacyls_DTD"/>
</dbReference>
<dbReference type="InterPro" id="IPR023509">
    <property type="entry name" value="DTD-like_sf"/>
</dbReference>
<dbReference type="NCBIfam" id="TIGR00256">
    <property type="entry name" value="D-aminoacyl-tRNA deacylase"/>
    <property type="match status" value="1"/>
</dbReference>
<dbReference type="PANTHER" id="PTHR10472:SF5">
    <property type="entry name" value="D-AMINOACYL-TRNA DEACYLASE 1"/>
    <property type="match status" value="1"/>
</dbReference>
<dbReference type="PANTHER" id="PTHR10472">
    <property type="entry name" value="D-TYROSYL-TRNA TYR DEACYLASE"/>
    <property type="match status" value="1"/>
</dbReference>
<dbReference type="Pfam" id="PF02580">
    <property type="entry name" value="Tyr_Deacylase"/>
    <property type="match status" value="1"/>
</dbReference>
<dbReference type="SUPFAM" id="SSF69500">
    <property type="entry name" value="DTD-like"/>
    <property type="match status" value="1"/>
</dbReference>
<comment type="function">
    <text evidence="1">An aminoacyl-tRNA editing enzyme that deacylates mischarged D-aminoacyl-tRNAs. Also deacylates mischarged glycyl-tRNA(Ala), protecting cells against glycine mischarging by AlaRS. Acts via tRNA-based rather than protein-based catalysis; rejects L-amino acids rather than detecting D-amino acids in the active site. By recycling D-aminoacyl-tRNA to D-amino acids and free tRNA molecules, this enzyme counteracts the toxicity associated with the formation of D-aminoacyl-tRNA entities in vivo and helps enforce protein L-homochirality.</text>
</comment>
<comment type="catalytic activity">
    <reaction evidence="1">
        <text>glycyl-tRNA(Ala) + H2O = tRNA(Ala) + glycine + H(+)</text>
        <dbReference type="Rhea" id="RHEA:53744"/>
        <dbReference type="Rhea" id="RHEA-COMP:9657"/>
        <dbReference type="Rhea" id="RHEA-COMP:13640"/>
        <dbReference type="ChEBI" id="CHEBI:15377"/>
        <dbReference type="ChEBI" id="CHEBI:15378"/>
        <dbReference type="ChEBI" id="CHEBI:57305"/>
        <dbReference type="ChEBI" id="CHEBI:78442"/>
        <dbReference type="ChEBI" id="CHEBI:78522"/>
        <dbReference type="EC" id="3.1.1.96"/>
    </reaction>
</comment>
<comment type="catalytic activity">
    <reaction evidence="1">
        <text>a D-aminoacyl-tRNA + H2O = a tRNA + a D-alpha-amino acid + H(+)</text>
        <dbReference type="Rhea" id="RHEA:13953"/>
        <dbReference type="Rhea" id="RHEA-COMP:10123"/>
        <dbReference type="Rhea" id="RHEA-COMP:10124"/>
        <dbReference type="ChEBI" id="CHEBI:15377"/>
        <dbReference type="ChEBI" id="CHEBI:15378"/>
        <dbReference type="ChEBI" id="CHEBI:59871"/>
        <dbReference type="ChEBI" id="CHEBI:78442"/>
        <dbReference type="ChEBI" id="CHEBI:79333"/>
        <dbReference type="EC" id="3.1.1.96"/>
    </reaction>
</comment>
<comment type="subunit">
    <text evidence="1">Homodimer.</text>
</comment>
<comment type="subcellular location">
    <subcellularLocation>
        <location evidence="1">Cytoplasm</location>
    </subcellularLocation>
</comment>
<comment type="domain">
    <text evidence="1">A Gly-cisPro motif from one monomer fits into the active site of the other monomer to allow specific chiral rejection of L-amino acids.</text>
</comment>
<comment type="similarity">
    <text evidence="1">Belongs to the DTD family.</text>
</comment>